<accession>Q8PHV2</accession>
<organism>
    <name type="scientific">Xanthomonas axonopodis pv. citri (strain 306)</name>
    <dbReference type="NCBI Taxonomy" id="190486"/>
    <lineage>
        <taxon>Bacteria</taxon>
        <taxon>Pseudomonadati</taxon>
        <taxon>Pseudomonadota</taxon>
        <taxon>Gammaproteobacteria</taxon>
        <taxon>Lysobacterales</taxon>
        <taxon>Lysobacteraceae</taxon>
        <taxon>Xanthomonas</taxon>
    </lineage>
</organism>
<sequence length="346" mass="37944">MTEQRIIASSSTREDDAADASIRPKRLADYLGQQPVREQMEIYIQAAKARGEAMDHVLIFGPPGLGKTTLSHVIANELGVSLRVTSGPVIEKAGDLAALLTNLQPHDVLFIDEIHRLSPVVEEVLYPAMEDFQIDIMIGDGPAARSIKIDLPPFTLIGATTRAGLLTAPLRDRFGIVQRLEFYSPQELTRIVIRSAAILGIDCTAEGAAEIARRARGTPRIANRLLRRVRDYAQVKAAGHIDLPVAQAAMQMLKVDPEGFDELDRRMLRTIVEHFDGGPVGVESLAASLSEERGTLEDVIEPYLIQQGFLIRTARGRMVTPKAYLHLGLKPPRERAPGIGEPGDLF</sequence>
<feature type="chain" id="PRO_0000165633" description="Holliday junction branch migration complex subunit RuvB">
    <location>
        <begin position="1"/>
        <end position="346"/>
    </location>
</feature>
<feature type="region of interest" description="Large ATPase domain (RuvB-L)" evidence="1">
    <location>
        <begin position="1"/>
        <end position="183"/>
    </location>
</feature>
<feature type="region of interest" description="Small ATPAse domain (RuvB-S)" evidence="1">
    <location>
        <begin position="184"/>
        <end position="254"/>
    </location>
</feature>
<feature type="region of interest" description="Head domain (RuvB-H)" evidence="1">
    <location>
        <begin position="257"/>
        <end position="346"/>
    </location>
</feature>
<feature type="binding site" evidence="1">
    <location>
        <position position="22"/>
    </location>
    <ligand>
        <name>ATP</name>
        <dbReference type="ChEBI" id="CHEBI:30616"/>
    </ligand>
</feature>
<feature type="binding site" evidence="1">
    <location>
        <position position="23"/>
    </location>
    <ligand>
        <name>ATP</name>
        <dbReference type="ChEBI" id="CHEBI:30616"/>
    </ligand>
</feature>
<feature type="binding site" evidence="1">
    <location>
        <position position="64"/>
    </location>
    <ligand>
        <name>ATP</name>
        <dbReference type="ChEBI" id="CHEBI:30616"/>
    </ligand>
</feature>
<feature type="binding site" evidence="1">
    <location>
        <position position="67"/>
    </location>
    <ligand>
        <name>ATP</name>
        <dbReference type="ChEBI" id="CHEBI:30616"/>
    </ligand>
</feature>
<feature type="binding site" evidence="1">
    <location>
        <position position="68"/>
    </location>
    <ligand>
        <name>ATP</name>
        <dbReference type="ChEBI" id="CHEBI:30616"/>
    </ligand>
</feature>
<feature type="binding site" evidence="1">
    <location>
        <position position="68"/>
    </location>
    <ligand>
        <name>Mg(2+)</name>
        <dbReference type="ChEBI" id="CHEBI:18420"/>
    </ligand>
</feature>
<feature type="binding site" evidence="1">
    <location>
        <position position="69"/>
    </location>
    <ligand>
        <name>ATP</name>
        <dbReference type="ChEBI" id="CHEBI:30616"/>
    </ligand>
</feature>
<feature type="binding site" evidence="1">
    <location>
        <begin position="130"/>
        <end position="132"/>
    </location>
    <ligand>
        <name>ATP</name>
        <dbReference type="ChEBI" id="CHEBI:30616"/>
    </ligand>
</feature>
<feature type="binding site" evidence="1">
    <location>
        <position position="173"/>
    </location>
    <ligand>
        <name>ATP</name>
        <dbReference type="ChEBI" id="CHEBI:30616"/>
    </ligand>
</feature>
<feature type="binding site" evidence="1">
    <location>
        <position position="183"/>
    </location>
    <ligand>
        <name>ATP</name>
        <dbReference type="ChEBI" id="CHEBI:30616"/>
    </ligand>
</feature>
<feature type="binding site" evidence="1">
    <location>
        <position position="220"/>
    </location>
    <ligand>
        <name>ATP</name>
        <dbReference type="ChEBI" id="CHEBI:30616"/>
    </ligand>
</feature>
<feature type="binding site" evidence="1">
    <location>
        <position position="293"/>
    </location>
    <ligand>
        <name>DNA</name>
        <dbReference type="ChEBI" id="CHEBI:16991"/>
    </ligand>
</feature>
<feature type="binding site" evidence="1">
    <location>
        <position position="312"/>
    </location>
    <ligand>
        <name>DNA</name>
        <dbReference type="ChEBI" id="CHEBI:16991"/>
    </ligand>
</feature>
<feature type="binding site" evidence="1">
    <location>
        <position position="317"/>
    </location>
    <ligand>
        <name>DNA</name>
        <dbReference type="ChEBI" id="CHEBI:16991"/>
    </ligand>
</feature>
<evidence type="ECO:0000255" key="1">
    <source>
        <dbReference type="HAMAP-Rule" id="MF_00016"/>
    </source>
</evidence>
<dbReference type="EC" id="3.6.4.-" evidence="1"/>
<dbReference type="EMBL" id="AE008923">
    <property type="protein sequence ID" value="AAM37991.1"/>
    <property type="molecule type" value="Genomic_DNA"/>
</dbReference>
<dbReference type="RefSeq" id="WP_003482572.1">
    <property type="nucleotide sequence ID" value="NC_003919.1"/>
</dbReference>
<dbReference type="SMR" id="Q8PHV2"/>
<dbReference type="GeneID" id="66912211"/>
<dbReference type="KEGG" id="xac:XAC3147"/>
<dbReference type="eggNOG" id="COG2255">
    <property type="taxonomic scope" value="Bacteria"/>
</dbReference>
<dbReference type="HOGENOM" id="CLU_055599_1_0_6"/>
<dbReference type="Proteomes" id="UP000000576">
    <property type="component" value="Chromosome"/>
</dbReference>
<dbReference type="GO" id="GO:0005737">
    <property type="term" value="C:cytoplasm"/>
    <property type="evidence" value="ECO:0007669"/>
    <property type="project" value="UniProtKB-SubCell"/>
</dbReference>
<dbReference type="GO" id="GO:0048476">
    <property type="term" value="C:Holliday junction resolvase complex"/>
    <property type="evidence" value="ECO:0007669"/>
    <property type="project" value="UniProtKB-UniRule"/>
</dbReference>
<dbReference type="GO" id="GO:0005524">
    <property type="term" value="F:ATP binding"/>
    <property type="evidence" value="ECO:0007669"/>
    <property type="project" value="UniProtKB-UniRule"/>
</dbReference>
<dbReference type="GO" id="GO:0016887">
    <property type="term" value="F:ATP hydrolysis activity"/>
    <property type="evidence" value="ECO:0007669"/>
    <property type="project" value="InterPro"/>
</dbReference>
<dbReference type="GO" id="GO:0000400">
    <property type="term" value="F:four-way junction DNA binding"/>
    <property type="evidence" value="ECO:0007669"/>
    <property type="project" value="UniProtKB-UniRule"/>
</dbReference>
<dbReference type="GO" id="GO:0009378">
    <property type="term" value="F:four-way junction helicase activity"/>
    <property type="evidence" value="ECO:0007669"/>
    <property type="project" value="InterPro"/>
</dbReference>
<dbReference type="GO" id="GO:0006310">
    <property type="term" value="P:DNA recombination"/>
    <property type="evidence" value="ECO:0007669"/>
    <property type="project" value="UniProtKB-UniRule"/>
</dbReference>
<dbReference type="GO" id="GO:0006281">
    <property type="term" value="P:DNA repair"/>
    <property type="evidence" value="ECO:0007669"/>
    <property type="project" value="UniProtKB-UniRule"/>
</dbReference>
<dbReference type="CDD" id="cd00009">
    <property type="entry name" value="AAA"/>
    <property type="match status" value="1"/>
</dbReference>
<dbReference type="FunFam" id="3.40.50.300:FF:000073">
    <property type="entry name" value="Holliday junction ATP-dependent DNA helicase RuvB"/>
    <property type="match status" value="1"/>
</dbReference>
<dbReference type="Gene3D" id="1.10.8.60">
    <property type="match status" value="1"/>
</dbReference>
<dbReference type="Gene3D" id="3.40.50.300">
    <property type="entry name" value="P-loop containing nucleotide triphosphate hydrolases"/>
    <property type="match status" value="1"/>
</dbReference>
<dbReference type="Gene3D" id="1.10.10.10">
    <property type="entry name" value="Winged helix-like DNA-binding domain superfamily/Winged helix DNA-binding domain"/>
    <property type="match status" value="1"/>
</dbReference>
<dbReference type="HAMAP" id="MF_00016">
    <property type="entry name" value="DNA_HJ_migration_RuvB"/>
    <property type="match status" value="1"/>
</dbReference>
<dbReference type="InterPro" id="IPR003593">
    <property type="entry name" value="AAA+_ATPase"/>
</dbReference>
<dbReference type="InterPro" id="IPR041445">
    <property type="entry name" value="AAA_lid_4"/>
</dbReference>
<dbReference type="InterPro" id="IPR004605">
    <property type="entry name" value="DNA_helicase_Holl-junc_RuvB"/>
</dbReference>
<dbReference type="InterPro" id="IPR027417">
    <property type="entry name" value="P-loop_NTPase"/>
</dbReference>
<dbReference type="InterPro" id="IPR008824">
    <property type="entry name" value="RuvB-like_N"/>
</dbReference>
<dbReference type="InterPro" id="IPR008823">
    <property type="entry name" value="RuvB_C"/>
</dbReference>
<dbReference type="InterPro" id="IPR036388">
    <property type="entry name" value="WH-like_DNA-bd_sf"/>
</dbReference>
<dbReference type="InterPro" id="IPR036390">
    <property type="entry name" value="WH_DNA-bd_sf"/>
</dbReference>
<dbReference type="NCBIfam" id="NF000868">
    <property type="entry name" value="PRK00080.1"/>
    <property type="match status" value="1"/>
</dbReference>
<dbReference type="NCBIfam" id="TIGR00635">
    <property type="entry name" value="ruvB"/>
    <property type="match status" value="1"/>
</dbReference>
<dbReference type="PANTHER" id="PTHR42848">
    <property type="match status" value="1"/>
</dbReference>
<dbReference type="PANTHER" id="PTHR42848:SF1">
    <property type="entry name" value="HOLLIDAY JUNCTION BRANCH MIGRATION COMPLEX SUBUNIT RUVB"/>
    <property type="match status" value="1"/>
</dbReference>
<dbReference type="Pfam" id="PF17864">
    <property type="entry name" value="AAA_lid_4"/>
    <property type="match status" value="1"/>
</dbReference>
<dbReference type="Pfam" id="PF05491">
    <property type="entry name" value="RuvB_C"/>
    <property type="match status" value="1"/>
</dbReference>
<dbReference type="Pfam" id="PF05496">
    <property type="entry name" value="RuvB_N"/>
    <property type="match status" value="1"/>
</dbReference>
<dbReference type="SMART" id="SM00382">
    <property type="entry name" value="AAA"/>
    <property type="match status" value="1"/>
</dbReference>
<dbReference type="SUPFAM" id="SSF52540">
    <property type="entry name" value="P-loop containing nucleoside triphosphate hydrolases"/>
    <property type="match status" value="1"/>
</dbReference>
<dbReference type="SUPFAM" id="SSF46785">
    <property type="entry name" value="Winged helix' DNA-binding domain"/>
    <property type="match status" value="1"/>
</dbReference>
<comment type="function">
    <text evidence="1">The RuvA-RuvB-RuvC complex processes Holliday junction (HJ) DNA during genetic recombination and DNA repair, while the RuvA-RuvB complex plays an important role in the rescue of blocked DNA replication forks via replication fork reversal (RFR). RuvA specifically binds to HJ cruciform DNA, conferring on it an open structure. The RuvB hexamer acts as an ATP-dependent pump, pulling dsDNA into and through the RuvAB complex. RuvB forms 2 homohexamers on either side of HJ DNA bound by 1 or 2 RuvA tetramers; 4 subunits per hexamer contact DNA at a time. Coordinated motions by a converter formed by DNA-disengaged RuvB subunits stimulates ATP hydrolysis and nucleotide exchange. Immobilization of the converter enables RuvB to convert the ATP-contained energy into a lever motion, pulling 2 nucleotides of DNA out of the RuvA tetramer per ATP hydrolyzed, thus driving DNA branch migration. The RuvB motors rotate together with the DNA substrate, which together with the progressing nucleotide cycle form the mechanistic basis for DNA recombination by continuous HJ branch migration. Branch migration allows RuvC to scan DNA until it finds its consensus sequence, where it cleaves and resolves cruciform DNA.</text>
</comment>
<comment type="catalytic activity">
    <reaction evidence="1">
        <text>ATP + H2O = ADP + phosphate + H(+)</text>
        <dbReference type="Rhea" id="RHEA:13065"/>
        <dbReference type="ChEBI" id="CHEBI:15377"/>
        <dbReference type="ChEBI" id="CHEBI:15378"/>
        <dbReference type="ChEBI" id="CHEBI:30616"/>
        <dbReference type="ChEBI" id="CHEBI:43474"/>
        <dbReference type="ChEBI" id="CHEBI:456216"/>
    </reaction>
</comment>
<comment type="subunit">
    <text evidence="1">Homohexamer. Forms an RuvA(8)-RuvB(12)-Holliday junction (HJ) complex. HJ DNA is sandwiched between 2 RuvA tetramers; dsDNA enters through RuvA and exits via RuvB. An RuvB hexamer assembles on each DNA strand where it exits the tetramer. Each RuvB hexamer is contacted by two RuvA subunits (via domain III) on 2 adjacent RuvB subunits; this complex drives branch migration. In the full resolvosome a probable DNA-RuvA(4)-RuvB(12)-RuvC(2) complex forms which resolves the HJ.</text>
</comment>
<comment type="subcellular location">
    <subcellularLocation>
        <location evidence="1">Cytoplasm</location>
    </subcellularLocation>
</comment>
<comment type="domain">
    <text evidence="1">Has 3 domains, the large (RuvB-L) and small ATPase (RuvB-S) domains and the C-terminal head (RuvB-H) domain. The head domain binds DNA, while the ATPase domains jointly bind ATP, ADP or are empty depending on the state of the subunit in the translocation cycle. During a single DNA translocation step the structure of each domain remains the same, but their relative positions change.</text>
</comment>
<comment type="similarity">
    <text evidence="1">Belongs to the RuvB family.</text>
</comment>
<name>RUVB_XANAC</name>
<proteinExistence type="inferred from homology"/>
<reference key="1">
    <citation type="journal article" date="2002" name="Nature">
        <title>Comparison of the genomes of two Xanthomonas pathogens with differing host specificities.</title>
        <authorList>
            <person name="da Silva A.C.R."/>
            <person name="Ferro J.A."/>
            <person name="Reinach F.C."/>
            <person name="Farah C.S."/>
            <person name="Furlan L.R."/>
            <person name="Quaggio R.B."/>
            <person name="Monteiro-Vitorello C.B."/>
            <person name="Van Sluys M.A."/>
            <person name="Almeida N.F. Jr."/>
            <person name="Alves L.M.C."/>
            <person name="do Amaral A.M."/>
            <person name="Bertolini M.C."/>
            <person name="Camargo L.E.A."/>
            <person name="Camarotte G."/>
            <person name="Cannavan F."/>
            <person name="Cardozo J."/>
            <person name="Chambergo F."/>
            <person name="Ciapina L.P."/>
            <person name="Cicarelli R.M.B."/>
            <person name="Coutinho L.L."/>
            <person name="Cursino-Santos J.R."/>
            <person name="El-Dorry H."/>
            <person name="Faria J.B."/>
            <person name="Ferreira A.J.S."/>
            <person name="Ferreira R.C.C."/>
            <person name="Ferro M.I.T."/>
            <person name="Formighieri E.F."/>
            <person name="Franco M.C."/>
            <person name="Greggio C.C."/>
            <person name="Gruber A."/>
            <person name="Katsuyama A.M."/>
            <person name="Kishi L.T."/>
            <person name="Leite R.P."/>
            <person name="Lemos E.G.M."/>
            <person name="Lemos M.V.F."/>
            <person name="Locali E.C."/>
            <person name="Machado M.A."/>
            <person name="Madeira A.M.B.N."/>
            <person name="Martinez-Rossi N.M."/>
            <person name="Martins E.C."/>
            <person name="Meidanis J."/>
            <person name="Menck C.F.M."/>
            <person name="Miyaki C.Y."/>
            <person name="Moon D.H."/>
            <person name="Moreira L.M."/>
            <person name="Novo M.T.M."/>
            <person name="Okura V.K."/>
            <person name="Oliveira M.C."/>
            <person name="Oliveira V.R."/>
            <person name="Pereira H.A."/>
            <person name="Rossi A."/>
            <person name="Sena J.A.D."/>
            <person name="Silva C."/>
            <person name="de Souza R.F."/>
            <person name="Spinola L.A.F."/>
            <person name="Takita M.A."/>
            <person name="Tamura R.E."/>
            <person name="Teixeira E.C."/>
            <person name="Tezza R.I.D."/>
            <person name="Trindade dos Santos M."/>
            <person name="Truffi D."/>
            <person name="Tsai S.M."/>
            <person name="White F.F."/>
            <person name="Setubal J.C."/>
            <person name="Kitajima J.P."/>
        </authorList>
    </citation>
    <scope>NUCLEOTIDE SEQUENCE [LARGE SCALE GENOMIC DNA]</scope>
    <source>
        <strain>306</strain>
    </source>
</reference>
<keyword id="KW-0067">ATP-binding</keyword>
<keyword id="KW-0963">Cytoplasm</keyword>
<keyword id="KW-0227">DNA damage</keyword>
<keyword id="KW-0233">DNA recombination</keyword>
<keyword id="KW-0234">DNA repair</keyword>
<keyword id="KW-0238">DNA-binding</keyword>
<keyword id="KW-0378">Hydrolase</keyword>
<keyword id="KW-0547">Nucleotide-binding</keyword>
<protein>
    <recommendedName>
        <fullName evidence="1">Holliday junction branch migration complex subunit RuvB</fullName>
        <ecNumber evidence="1">3.6.4.-</ecNumber>
    </recommendedName>
</protein>
<gene>
    <name evidence="1" type="primary">ruvB</name>
    <name type="ordered locus">XAC3147</name>
</gene>